<sequence>MTHVLSAAANDLIACVLRDNLFSADGECLRYVVCKEAGHVESVYIGEIGAAQAHSGDQNAVLDASSASDVSSSASSRRVS</sequence>
<protein>
    <recommendedName>
        <fullName>Late expression factor 10</fullName>
    </recommendedName>
</protein>
<keyword id="KW-0010">Activator</keyword>
<keyword id="KW-1185">Reference proteome</keyword>
<keyword id="KW-0804">Transcription</keyword>
<keyword id="KW-0805">Transcription regulation</keyword>
<comment type="function">
    <text evidence="1">Involved in late/very late gene activation.</text>
</comment>
<comment type="similarity">
    <text evidence="2">Belongs to the baculoviridae LEF-10 family.</text>
</comment>
<gene>
    <name type="primary">LEF-10</name>
    <name type="ORF">ORF57</name>
</gene>
<proteinExistence type="inferred from homology"/>
<name>LEF10_NPVOP</name>
<evidence type="ECO:0000250" key="1"/>
<evidence type="ECO:0000305" key="2"/>
<feature type="chain" id="PRO_0000132833" description="Late expression factor 10">
    <location>
        <begin position="1"/>
        <end position="80"/>
    </location>
</feature>
<organism>
    <name type="scientific">Orgyia pseudotsugata multicapsid polyhedrosis virus</name>
    <name type="common">OpMNPV</name>
    <dbReference type="NCBI Taxonomy" id="262177"/>
    <lineage>
        <taxon>Viruses</taxon>
        <taxon>Viruses incertae sedis</taxon>
        <taxon>Naldaviricetes</taxon>
        <taxon>Lefavirales</taxon>
        <taxon>Baculoviridae</taxon>
        <taxon>Alphabaculovirus</taxon>
        <taxon>Alphabaculovirus orpseudotsugatae</taxon>
    </lineage>
</organism>
<dbReference type="EMBL" id="U75930">
    <property type="protein sequence ID" value="AAC59056.1"/>
    <property type="molecule type" value="Genomic_DNA"/>
</dbReference>
<dbReference type="RefSeq" id="NP_046213.1">
    <property type="nucleotide sequence ID" value="NC_001875.2"/>
</dbReference>
<dbReference type="KEGG" id="vg:912074"/>
<dbReference type="OrthoDB" id="26385at10239"/>
<dbReference type="Proteomes" id="UP000009248">
    <property type="component" value="Genome"/>
</dbReference>
<dbReference type="InterPro" id="IPR009855">
    <property type="entry name" value="Baculo_LEF-10"/>
</dbReference>
<dbReference type="Pfam" id="PF07206">
    <property type="entry name" value="Baculo_LEF-10"/>
    <property type="match status" value="1"/>
</dbReference>
<organismHost>
    <name type="scientific">Orgyia pseudotsugata</name>
    <name type="common">Douglas-fir tussock moth</name>
    <dbReference type="NCBI Taxonomy" id="33414"/>
</organismHost>
<reference key="1">
    <citation type="journal article" date="1997" name="Virology">
        <title>The sequence of the Orgyia pseudotsugata multinucleocapsid nuclear polyhedrosis virus genome.</title>
        <authorList>
            <person name="Ahrens C.H."/>
            <person name="Russell R.R."/>
            <person name="Funk C.J."/>
            <person name="Evans J."/>
            <person name="Harwood S."/>
            <person name="Rohrmann G.F."/>
        </authorList>
    </citation>
    <scope>NUCLEOTIDE SEQUENCE [LARGE SCALE GENOMIC DNA]</scope>
</reference>
<accession>O10311</accession>